<comment type="subunit">
    <text>Monomer or heterodimer with PSP-I (depending on the type of glycosylation of PSP-I).</text>
</comment>
<comment type="subcellular location">
    <subcellularLocation>
        <location>Secreted</location>
    </subcellularLocation>
</comment>
<comment type="tissue specificity">
    <text>Seminal plasma or sperm.</text>
</comment>
<comment type="mass spectrometry"/>
<comment type="similarity">
    <text evidence="4">Belongs to the spermadhesin family.</text>
</comment>
<protein>
    <recommendedName>
        <fullName>Major seminal plasma glycoprotein PSP-II</fullName>
    </recommendedName>
</protein>
<evidence type="ECO:0000255" key="1">
    <source>
        <dbReference type="PROSITE-ProRule" id="PRU00059"/>
    </source>
</evidence>
<evidence type="ECO:0000269" key="2">
    <source>
    </source>
</evidence>
<evidence type="ECO:0000269" key="3">
    <source>
    </source>
</evidence>
<evidence type="ECO:0000305" key="4"/>
<evidence type="ECO:0007829" key="5">
    <source>
        <dbReference type="PDB" id="1SPP"/>
    </source>
</evidence>
<name>PSP2_PIG</name>
<reference key="1">
    <citation type="journal article" date="1993" name="DNA Cell Biol.">
        <title>Molecular cloning and sequence analysis of two porcine seminal proteins, PSP-I and PSP-II: new members of the spermadhesin family.</title>
        <authorList>
            <person name="Kwok S.C.M."/>
            <person name="Yang D."/>
            <person name="Dai G."/>
            <person name="Soares M.J."/>
            <person name="Chen S."/>
            <person name="McMurtry J.P."/>
        </authorList>
    </citation>
    <scope>NUCLEOTIDE SEQUENCE [MRNA]</scope>
    <source>
        <tissue>Seminal vesicle</tissue>
    </source>
</reference>
<reference key="2">
    <citation type="journal article" date="1992" name="Arch. Biochem. Biophys.">
        <title>Purification and characterization of PSP-I and PSP-II, two major proteins from porcine seminal plasma.</title>
        <authorList>
            <person name="Rutherfurd K.J."/>
            <person name="Swiderek K.M."/>
            <person name="Green C.B."/>
            <person name="Chen S."/>
            <person name="Shively J.E."/>
            <person name="Kwok S.C.M."/>
        </authorList>
    </citation>
    <scope>PROTEIN SEQUENCE OF 22-34</scope>
    <source>
        <tissue>Sperm</tissue>
    </source>
</reference>
<reference key="3">
    <citation type="journal article" date="1995" name="FEBS Lett.">
        <title>Boar spermadhesin PSP-II: location of posttranslational modifications, heterodimer formation with PSP-I glycoforms and effect of dimerization on the ligand-binding capabilities of the subunits.</title>
        <authorList>
            <person name="Calvete J.J."/>
            <person name="Mann K."/>
            <person name="Schaefer W."/>
            <person name="Raida M."/>
            <person name="Sanz L."/>
            <person name="Toepfer-Petersen E."/>
        </authorList>
    </citation>
    <scope>PARTIAL PROTEIN SEQUENCE</scope>
    <scope>DISULFIDE BONDS</scope>
    <scope>GLYCOSYLATION AT ASN-119</scope>
    <scope>MASS SPECTROMETRY</scope>
    <source>
        <tissue>Sperm</tissue>
    </source>
</reference>
<reference key="4">
    <citation type="journal article" date="1999" name="Eur. J. Biochem.">
        <title>Structural characterization of the oligosaccharide chains of native and crystallized boar seminal plasma spermadhesin PSP-I and PSP-II glycoforms.</title>
        <authorList>
            <person name="Nimtz M."/>
            <person name="Grabenhorst E."/>
            <person name="Conradt H.S."/>
            <person name="Sanz L."/>
            <person name="Calvete J.J."/>
        </authorList>
    </citation>
    <scope>STRUCTURE OF CARBOHYDRATE</scope>
</reference>
<reference key="5">
    <citation type="journal article" date="1997" name="Nat. Struct. Biol.">
        <title>The crystal structures of two spermadhesins reveal the CUB domain fold.</title>
        <authorList>
            <person name="Romero A."/>
            <person name="Romao M.J."/>
            <person name="Varela P.F."/>
            <person name="Koelln I."/>
            <person name="Dias J.M."/>
            <person name="Carvalho A.L."/>
            <person name="Sanz L."/>
            <person name="Toepfer-Petersen E."/>
            <person name="Calvete J.J."/>
        </authorList>
    </citation>
    <scope>X-RAY CRYSTALLOGRAPHY (2.4 ANGSTROMS)</scope>
</reference>
<feature type="signal peptide" evidence="2">
    <location>
        <begin position="1"/>
        <end position="21"/>
    </location>
</feature>
<feature type="chain" id="PRO_0000033189" description="Major seminal plasma glycoprotein PSP-II">
    <location>
        <begin position="22"/>
        <end position="137"/>
    </location>
</feature>
<feature type="domain" description="CUB" evidence="1">
    <location>
        <begin position="30"/>
        <end position="131"/>
    </location>
</feature>
<feature type="glycosylation site" id="CAR_000148" description="N-linked (GlcNAc...) (complex) asparagine" evidence="3">
    <location>
        <position position="119"/>
    </location>
</feature>
<feature type="disulfide bond" evidence="1 3">
    <location>
        <begin position="30"/>
        <end position="51"/>
    </location>
</feature>
<feature type="disulfide bond" evidence="1 3">
    <location>
        <begin position="74"/>
        <end position="95"/>
    </location>
</feature>
<feature type="strand" evidence="5">
    <location>
        <begin position="23"/>
        <end position="25"/>
    </location>
</feature>
<feature type="helix" evidence="5">
    <location>
        <begin position="26"/>
        <end position="29"/>
    </location>
</feature>
<feature type="strand" evidence="5">
    <location>
        <begin position="32"/>
        <end position="34"/>
    </location>
</feature>
<feature type="strand" evidence="5">
    <location>
        <begin position="37"/>
        <end position="42"/>
    </location>
</feature>
<feature type="strand" evidence="5">
    <location>
        <begin position="49"/>
        <end position="56"/>
    </location>
</feature>
<feature type="strand" evidence="5">
    <location>
        <begin position="62"/>
        <end position="71"/>
    </location>
</feature>
<feature type="strand" evidence="5">
    <location>
        <begin position="77"/>
        <end position="85"/>
    </location>
</feature>
<feature type="strand" evidence="5">
    <location>
        <begin position="90"/>
        <end position="103"/>
    </location>
</feature>
<feature type="strand" evidence="5">
    <location>
        <begin position="105"/>
        <end position="117"/>
    </location>
</feature>
<feature type="strand" evidence="5">
    <location>
        <begin position="125"/>
        <end position="131"/>
    </location>
</feature>
<accession>P35496</accession>
<sequence>MKLGTAIPWALLLSTATLVSTARINGPDECGRVIKDTSGSISNTDRQKNLCTWTILMKPDQKVRMAIPYLNLACGKEYVEVFDGLLSGPSYGKLCAGAAIVFLSTANTMTIKYNRISGNSSSPFLIYFYGSSPGSEY</sequence>
<proteinExistence type="evidence at protein level"/>
<organism>
    <name type="scientific">Sus scrofa</name>
    <name type="common">Pig</name>
    <dbReference type="NCBI Taxonomy" id="9823"/>
    <lineage>
        <taxon>Eukaryota</taxon>
        <taxon>Metazoa</taxon>
        <taxon>Chordata</taxon>
        <taxon>Craniata</taxon>
        <taxon>Vertebrata</taxon>
        <taxon>Euteleostomi</taxon>
        <taxon>Mammalia</taxon>
        <taxon>Eutheria</taxon>
        <taxon>Laurasiatheria</taxon>
        <taxon>Artiodactyla</taxon>
        <taxon>Suina</taxon>
        <taxon>Suidae</taxon>
        <taxon>Sus</taxon>
    </lineage>
</organism>
<keyword id="KW-0002">3D-structure</keyword>
<keyword id="KW-0903">Direct protein sequencing</keyword>
<keyword id="KW-1015">Disulfide bond</keyword>
<keyword id="KW-0325">Glycoprotein</keyword>
<keyword id="KW-1185">Reference proteome</keyword>
<keyword id="KW-0964">Secreted</keyword>
<keyword id="KW-0732">Signal</keyword>
<dbReference type="EMBL" id="U02627">
    <property type="protein sequence ID" value="AAC48400.1"/>
    <property type="molecule type" value="mRNA"/>
</dbReference>
<dbReference type="PIR" id="S65875">
    <property type="entry name" value="S65875"/>
</dbReference>
<dbReference type="RefSeq" id="NP_999001.1">
    <property type="nucleotide sequence ID" value="NM_213836.1"/>
</dbReference>
<dbReference type="PDB" id="1SPP">
    <property type="method" value="X-ray"/>
    <property type="resolution" value="2.40 A"/>
    <property type="chains" value="B=22-137"/>
</dbReference>
<dbReference type="PDBsum" id="1SPP"/>
<dbReference type="SMR" id="P35496"/>
<dbReference type="MINT" id="P35496"/>
<dbReference type="GlyConnect" id="361">
    <property type="glycosylation" value="39 N-Linked glycans (1 site)"/>
</dbReference>
<dbReference type="GlyGen" id="P35496">
    <property type="glycosylation" value="2 sites, 71 N-linked glycans (2 sites)"/>
</dbReference>
<dbReference type="PaxDb" id="9823-ENSSSCP00000003225"/>
<dbReference type="PeptideAtlas" id="P35496"/>
<dbReference type="GeneID" id="396817"/>
<dbReference type="KEGG" id="ssc:396817"/>
<dbReference type="CTD" id="396817"/>
<dbReference type="eggNOG" id="ENOG502TD48">
    <property type="taxonomic scope" value="Eukaryota"/>
</dbReference>
<dbReference type="InParanoid" id="P35496"/>
<dbReference type="OrthoDB" id="34908at91561"/>
<dbReference type="EvolutionaryTrace" id="P35496"/>
<dbReference type="Proteomes" id="UP000008227">
    <property type="component" value="Unplaced"/>
</dbReference>
<dbReference type="Proteomes" id="UP000314985">
    <property type="component" value="Unplaced"/>
</dbReference>
<dbReference type="Proteomes" id="UP000694570">
    <property type="component" value="Unplaced"/>
</dbReference>
<dbReference type="Proteomes" id="UP000694571">
    <property type="component" value="Unplaced"/>
</dbReference>
<dbReference type="Proteomes" id="UP000694720">
    <property type="component" value="Unplaced"/>
</dbReference>
<dbReference type="Proteomes" id="UP000694722">
    <property type="component" value="Unplaced"/>
</dbReference>
<dbReference type="Proteomes" id="UP000694723">
    <property type="component" value="Unplaced"/>
</dbReference>
<dbReference type="Proteomes" id="UP000694724">
    <property type="component" value="Unplaced"/>
</dbReference>
<dbReference type="Proteomes" id="UP000694725">
    <property type="component" value="Unplaced"/>
</dbReference>
<dbReference type="Proteomes" id="UP000694726">
    <property type="component" value="Unplaced"/>
</dbReference>
<dbReference type="Proteomes" id="UP000694727">
    <property type="component" value="Unplaced"/>
</dbReference>
<dbReference type="Proteomes" id="UP000694728">
    <property type="component" value="Unplaced"/>
</dbReference>
<dbReference type="GO" id="GO:0005576">
    <property type="term" value="C:extracellular region"/>
    <property type="evidence" value="ECO:0007669"/>
    <property type="project" value="UniProtKB-SubCell"/>
</dbReference>
<dbReference type="GO" id="GO:0007338">
    <property type="term" value="P:single fertilization"/>
    <property type="evidence" value="ECO:0007669"/>
    <property type="project" value="InterPro"/>
</dbReference>
<dbReference type="CDD" id="cd00041">
    <property type="entry name" value="CUB"/>
    <property type="match status" value="1"/>
</dbReference>
<dbReference type="Gene3D" id="2.60.120.290">
    <property type="entry name" value="Spermadhesin, CUB domain"/>
    <property type="match status" value="1"/>
</dbReference>
<dbReference type="InterPro" id="IPR000859">
    <property type="entry name" value="CUB_dom"/>
</dbReference>
<dbReference type="InterPro" id="IPR035914">
    <property type="entry name" value="Sperma_CUB_dom_sf"/>
</dbReference>
<dbReference type="InterPro" id="IPR000124">
    <property type="entry name" value="Spermadhesin"/>
</dbReference>
<dbReference type="Pfam" id="PF00431">
    <property type="entry name" value="CUB"/>
    <property type="match status" value="1"/>
</dbReference>
<dbReference type="SMART" id="SM00042">
    <property type="entry name" value="CUB"/>
    <property type="match status" value="1"/>
</dbReference>
<dbReference type="SUPFAM" id="SSF49854">
    <property type="entry name" value="Spermadhesin, CUB domain"/>
    <property type="match status" value="1"/>
</dbReference>
<dbReference type="PROSITE" id="PS01180">
    <property type="entry name" value="CUB"/>
    <property type="match status" value="1"/>
</dbReference>
<dbReference type="PROSITE" id="PS00985">
    <property type="entry name" value="SPERMADHESIN_1"/>
    <property type="match status" value="1"/>
</dbReference>
<dbReference type="PROSITE" id="PS00986">
    <property type="entry name" value="SPERMADHESIN_2"/>
    <property type="match status" value="1"/>
</dbReference>